<gene>
    <name type="primary">NUR1</name>
    <name type="ORF">EC1118_1D0_1354g</name>
</gene>
<sequence>MGSNDLINEAYDDSEVVGEERESKSAWMKRWYQLLTSPLDLQLVINEKLEMINWDAYAKSLAKPLGNFLTILFFIIRLLQDNLIKPNYYKLNVKSGAFDLSKSNKLKEFDYLWEISSSFQNSNQFYAFQSWYFVTLRFLNNLFRFTIFILLSLNLYVSCKFMFGYFKTYNLFHLKKEFNSPNLTKHNLKDLSKEYYEDIYKQSLWSMLKHFFRGSRDDGPHVNQNEVEIFFQLRKWIPTNFMINLFVSFSPTAIVFLSFSDVSFTSAIAIVFHQYILDYIITKRFQRSVDDDLILSSAALQEYEDKHIMVRINQCSNIDTLSSAMGTRSKTPRIFTTHSLCGEEIREVYNYEKREFEALPKMTESVPGSRETRIKDYGGISQVSDNQSHPIGFHYSPRMSPYYRDKVLDNNLAQSSSNENLEKGGAFLPNQDQNRPSKSLSPLRKTPLSARQKRFEGSEFNVLNKNDINSILRSPKKKKNYHKR</sequence>
<evidence type="ECO:0000250" key="1"/>
<evidence type="ECO:0000250" key="2">
    <source>
        <dbReference type="UniProtKB" id="Q12066"/>
    </source>
</evidence>
<evidence type="ECO:0000255" key="3"/>
<evidence type="ECO:0000256" key="4">
    <source>
        <dbReference type="SAM" id="MobiDB-lite"/>
    </source>
</evidence>
<evidence type="ECO:0000305" key="5"/>
<keyword id="KW-0472">Membrane</keyword>
<keyword id="KW-0539">Nucleus</keyword>
<keyword id="KW-0597">Phosphoprotein</keyword>
<keyword id="KW-0812">Transmembrane</keyword>
<keyword id="KW-1133">Transmembrane helix</keyword>
<name>NUR1_YEAS8</name>
<dbReference type="EMBL" id="FN393063">
    <property type="protein sequence ID" value="CAY78419.1"/>
    <property type="molecule type" value="Genomic_DNA"/>
</dbReference>
<dbReference type="HOGENOM" id="CLU_033252_1_0_1"/>
<dbReference type="OrthoDB" id="13877at4893"/>
<dbReference type="Proteomes" id="UP000000286">
    <property type="component" value="Chromosome IV, Scaffold EC1118_1D0"/>
</dbReference>
<dbReference type="GO" id="GO:0031965">
    <property type="term" value="C:nuclear membrane"/>
    <property type="evidence" value="ECO:0007669"/>
    <property type="project" value="UniProtKB-SubCell"/>
</dbReference>
<dbReference type="GO" id="GO:0043007">
    <property type="term" value="P:maintenance of rDNA"/>
    <property type="evidence" value="ECO:0007669"/>
    <property type="project" value="TreeGrafter"/>
</dbReference>
<dbReference type="GO" id="GO:0007096">
    <property type="term" value="P:regulation of exit from mitosis"/>
    <property type="evidence" value="ECO:0007669"/>
    <property type="project" value="TreeGrafter"/>
</dbReference>
<dbReference type="InterPro" id="IPR018819">
    <property type="entry name" value="Nur1/Mug154"/>
</dbReference>
<dbReference type="PANTHER" id="PTHR28293">
    <property type="entry name" value="NUCLEAR RIM PROTEIN 1"/>
    <property type="match status" value="1"/>
</dbReference>
<dbReference type="PANTHER" id="PTHR28293:SF1">
    <property type="entry name" value="NUCLEAR RIM PROTEIN 1"/>
    <property type="match status" value="1"/>
</dbReference>
<dbReference type="Pfam" id="PF10332">
    <property type="entry name" value="DUF2418"/>
    <property type="match status" value="1"/>
</dbReference>
<proteinExistence type="inferred from homology"/>
<accession>C8Z6L4</accession>
<comment type="function">
    <text evidence="1">Member of a perinuclear network that controls recombination at multiple loci to maintain genome stability. Required for rDNA repeat stability (By similarity).</text>
</comment>
<comment type="subunit">
    <text evidence="1">Interacts with CSM1.</text>
</comment>
<comment type="subcellular location">
    <subcellularLocation>
        <location evidence="1">Nucleus membrane</location>
        <topology evidence="1">Multi-pass membrane protein</topology>
    </subcellularLocation>
</comment>
<comment type="similarity">
    <text evidence="5">Belongs to the NUR1 family.</text>
</comment>
<organism>
    <name type="scientific">Saccharomyces cerevisiae (strain Lalvin EC1118 / Prise de mousse)</name>
    <name type="common">Baker's yeast</name>
    <dbReference type="NCBI Taxonomy" id="643680"/>
    <lineage>
        <taxon>Eukaryota</taxon>
        <taxon>Fungi</taxon>
        <taxon>Dikarya</taxon>
        <taxon>Ascomycota</taxon>
        <taxon>Saccharomycotina</taxon>
        <taxon>Saccharomycetes</taxon>
        <taxon>Saccharomycetales</taxon>
        <taxon>Saccharomycetaceae</taxon>
        <taxon>Saccharomyces</taxon>
    </lineage>
</organism>
<feature type="chain" id="PRO_0000409035" description="Nuclear rim protein 1">
    <location>
        <begin position="1"/>
        <end position="484"/>
    </location>
</feature>
<feature type="transmembrane region" description="Helical" evidence="3">
    <location>
        <begin position="145"/>
        <end position="165"/>
    </location>
</feature>
<feature type="transmembrane region" description="Helical" evidence="3">
    <location>
        <begin position="252"/>
        <end position="272"/>
    </location>
</feature>
<feature type="region of interest" description="Disordered" evidence="4">
    <location>
        <begin position="416"/>
        <end position="457"/>
    </location>
</feature>
<feature type="compositionally biased region" description="Polar residues" evidence="4">
    <location>
        <begin position="430"/>
        <end position="440"/>
    </location>
</feature>
<feature type="modified residue" description="Phosphoserine" evidence="2">
    <location>
        <position position="3"/>
    </location>
</feature>
<feature type="modified residue" description="Phosphoserine" evidence="2">
    <location>
        <position position="417"/>
    </location>
</feature>
<feature type="modified residue" description="Phosphoserine" evidence="2">
    <location>
        <position position="474"/>
    </location>
</feature>
<reference key="1">
    <citation type="journal article" date="2009" name="Proc. Natl. Acad. Sci. U.S.A.">
        <title>Eukaryote-to-eukaryote gene transfer events revealed by the genome sequence of the wine yeast Saccharomyces cerevisiae EC1118.</title>
        <authorList>
            <person name="Novo M."/>
            <person name="Bigey F."/>
            <person name="Beyne E."/>
            <person name="Galeote V."/>
            <person name="Gavory F."/>
            <person name="Mallet S."/>
            <person name="Cambon B."/>
            <person name="Legras J.-L."/>
            <person name="Wincker P."/>
            <person name="Casaregola S."/>
            <person name="Dequin S."/>
        </authorList>
    </citation>
    <scope>NUCLEOTIDE SEQUENCE [LARGE SCALE GENOMIC DNA]</scope>
    <source>
        <strain>Lalvin EC1118 / Prise de mousse</strain>
    </source>
</reference>
<protein>
    <recommendedName>
        <fullName>Nuclear rim protein 1</fullName>
    </recommendedName>
</protein>